<dbReference type="EMBL" id="AL163763">
    <property type="protein sequence ID" value="CAB87424.1"/>
    <property type="molecule type" value="Genomic_DNA"/>
</dbReference>
<dbReference type="EMBL" id="CP002686">
    <property type="protein sequence ID" value="AEE79501.1"/>
    <property type="molecule type" value="Genomic_DNA"/>
</dbReference>
<dbReference type="EMBL" id="CP002686">
    <property type="protein sequence ID" value="ANM64710.1"/>
    <property type="molecule type" value="Genomic_DNA"/>
</dbReference>
<dbReference type="PIR" id="T47742">
    <property type="entry name" value="T47742"/>
</dbReference>
<dbReference type="RefSeq" id="NP_001326720.1">
    <molecule id="Q9LYL8-2"/>
    <property type="nucleotide sequence ID" value="NM_001339781.1"/>
</dbReference>
<dbReference type="RefSeq" id="NP_191184.1">
    <molecule id="Q9LYL8-1"/>
    <property type="nucleotide sequence ID" value="NM_115483.1"/>
</dbReference>
<dbReference type="SMR" id="Q9LYL8"/>
<dbReference type="PaxDb" id="3702-AT3G56250.1"/>
<dbReference type="EnsemblPlants" id="AT3G56250.1">
    <molecule id="Q9LYL8-1"/>
    <property type="protein sequence ID" value="AT3G56250.1"/>
    <property type="gene ID" value="AT3G56250"/>
</dbReference>
<dbReference type="EnsemblPlants" id="AT3G56250.2">
    <molecule id="Q9LYL8-2"/>
    <property type="protein sequence ID" value="AT3G56250.2"/>
    <property type="gene ID" value="AT3G56250"/>
</dbReference>
<dbReference type="GeneID" id="824791"/>
<dbReference type="Gramene" id="AT3G56250.1">
    <molecule id="Q9LYL8-1"/>
    <property type="protein sequence ID" value="AT3G56250.1"/>
    <property type="gene ID" value="AT3G56250"/>
</dbReference>
<dbReference type="Gramene" id="AT3G56250.2">
    <molecule id="Q9LYL8-2"/>
    <property type="protein sequence ID" value="AT3G56250.2"/>
    <property type="gene ID" value="AT3G56250"/>
</dbReference>
<dbReference type="KEGG" id="ath:AT3G56250"/>
<dbReference type="Araport" id="AT3G56250"/>
<dbReference type="TAIR" id="AT3G56250"/>
<dbReference type="eggNOG" id="ENOG502SFAE">
    <property type="taxonomic scope" value="Eukaryota"/>
</dbReference>
<dbReference type="HOGENOM" id="CLU_084111_0_0_1"/>
<dbReference type="OMA" id="CSVYTRR"/>
<dbReference type="Proteomes" id="UP000006548">
    <property type="component" value="Chromosome 3"/>
</dbReference>
<dbReference type="ExpressionAtlas" id="Q9LYL8">
    <property type="expression patterns" value="baseline and differential"/>
</dbReference>
<dbReference type="GO" id="GO:0005634">
    <property type="term" value="C:nucleus"/>
    <property type="evidence" value="ECO:0000250"/>
    <property type="project" value="UniProtKB"/>
</dbReference>
<dbReference type="GO" id="GO:0009556">
    <property type="term" value="P:microsporogenesis"/>
    <property type="evidence" value="ECO:0000315"/>
    <property type="project" value="UniProtKB"/>
</dbReference>
<dbReference type="GO" id="GO:0007063">
    <property type="term" value="P:regulation of sister chromatid cohesion"/>
    <property type="evidence" value="ECO:0000315"/>
    <property type="project" value="UniProtKB"/>
</dbReference>
<dbReference type="PANTHER" id="PTHR35740">
    <property type="entry name" value="OS12G0111700 PROTEIN"/>
    <property type="match status" value="1"/>
</dbReference>
<dbReference type="PANTHER" id="PTHR35740:SF1">
    <property type="entry name" value="OS12G0111700 PROTEIN"/>
    <property type="match status" value="1"/>
</dbReference>
<dbReference type="Pfam" id="PF25220">
    <property type="entry name" value="Sororin_C"/>
    <property type="match status" value="1"/>
</dbReference>
<keyword id="KW-0024">Alternative initiation</keyword>
<keyword id="KW-0131">Cell cycle</keyword>
<keyword id="KW-0132">Cell division</keyword>
<keyword id="KW-0498">Mitosis</keyword>
<keyword id="KW-0539">Nucleus</keyword>
<keyword id="KW-1185">Reference proteome</keyword>
<protein>
    <recommendedName>
        <fullName evidence="5">Sororin-like protein</fullName>
        <shortName evidence="5">AtSORORIN</shortName>
    </recommendedName>
</protein>
<gene>
    <name evidence="5" type="primary">SORORIN</name>
    <name evidence="7" type="ordered locus">At3g56250</name>
    <name evidence="8" type="ORF">F18O21_210</name>
</gene>
<feature type="chain" id="PRO_0000462110" description="Sororin-like protein">
    <location>
        <begin position="1"/>
        <end position="222"/>
    </location>
</feature>
<feature type="region of interest" description="Disordered" evidence="3">
    <location>
        <begin position="1"/>
        <end position="189"/>
    </location>
</feature>
<feature type="region of interest" description="C-terminal Sororin domain" evidence="5">
    <location>
        <begin position="192"/>
        <end position="214"/>
    </location>
</feature>
<feature type="short sequence motif" description="Nuclear localization signal" evidence="2">
    <location>
        <begin position="155"/>
        <end position="162"/>
    </location>
</feature>
<feature type="compositionally biased region" description="Low complexity" evidence="3">
    <location>
        <begin position="24"/>
        <end position="33"/>
    </location>
</feature>
<feature type="compositionally biased region" description="Basic and acidic residues" evidence="3">
    <location>
        <begin position="47"/>
        <end position="60"/>
    </location>
</feature>
<feature type="compositionally biased region" description="Low complexity" evidence="3">
    <location>
        <begin position="88"/>
        <end position="105"/>
    </location>
</feature>
<feature type="compositionally biased region" description="Basic residues" evidence="3">
    <location>
        <begin position="167"/>
        <end position="179"/>
    </location>
</feature>
<feature type="splice variant" id="VSP_062532" description="In isoform 2.">
    <original>M</original>
    <variation>MNHPKIPTPGKQM</variation>
    <location>
        <position position="1"/>
    </location>
</feature>
<reference key="1">
    <citation type="journal article" date="2000" name="Nature">
        <title>Sequence and analysis of chromosome 3 of the plant Arabidopsis thaliana.</title>
        <authorList>
            <person name="Salanoubat M."/>
            <person name="Lemcke K."/>
            <person name="Rieger M."/>
            <person name="Ansorge W."/>
            <person name="Unseld M."/>
            <person name="Fartmann B."/>
            <person name="Valle G."/>
            <person name="Bloecker H."/>
            <person name="Perez-Alonso M."/>
            <person name="Obermaier B."/>
            <person name="Delseny M."/>
            <person name="Boutry M."/>
            <person name="Grivell L.A."/>
            <person name="Mache R."/>
            <person name="Puigdomenech P."/>
            <person name="De Simone V."/>
            <person name="Choisne N."/>
            <person name="Artiguenave F."/>
            <person name="Robert C."/>
            <person name="Brottier P."/>
            <person name="Wincker P."/>
            <person name="Cattolico L."/>
            <person name="Weissenbach J."/>
            <person name="Saurin W."/>
            <person name="Quetier F."/>
            <person name="Schaefer M."/>
            <person name="Mueller-Auer S."/>
            <person name="Gabel C."/>
            <person name="Fuchs M."/>
            <person name="Benes V."/>
            <person name="Wurmbach E."/>
            <person name="Drzonek H."/>
            <person name="Erfle H."/>
            <person name="Jordan N."/>
            <person name="Bangert S."/>
            <person name="Wiedelmann R."/>
            <person name="Kranz H."/>
            <person name="Voss H."/>
            <person name="Holland R."/>
            <person name="Brandt P."/>
            <person name="Nyakatura G."/>
            <person name="Vezzi A."/>
            <person name="D'Angelo M."/>
            <person name="Pallavicini A."/>
            <person name="Toppo S."/>
            <person name="Simionati B."/>
            <person name="Conrad A."/>
            <person name="Hornischer K."/>
            <person name="Kauer G."/>
            <person name="Loehnert T.-H."/>
            <person name="Nordsiek G."/>
            <person name="Reichelt J."/>
            <person name="Scharfe M."/>
            <person name="Schoen O."/>
            <person name="Bargues M."/>
            <person name="Terol J."/>
            <person name="Climent J."/>
            <person name="Navarro P."/>
            <person name="Collado C."/>
            <person name="Perez-Perez A."/>
            <person name="Ottenwaelder B."/>
            <person name="Duchemin D."/>
            <person name="Cooke R."/>
            <person name="Laudie M."/>
            <person name="Berger-Llauro C."/>
            <person name="Purnelle B."/>
            <person name="Masuy D."/>
            <person name="de Haan M."/>
            <person name="Maarse A.C."/>
            <person name="Alcaraz J.-P."/>
            <person name="Cottet A."/>
            <person name="Casacuberta E."/>
            <person name="Monfort A."/>
            <person name="Argiriou A."/>
            <person name="Flores M."/>
            <person name="Liguori R."/>
            <person name="Vitale D."/>
            <person name="Mannhaupt G."/>
            <person name="Haase D."/>
            <person name="Schoof H."/>
            <person name="Rudd S."/>
            <person name="Zaccaria P."/>
            <person name="Mewes H.-W."/>
            <person name="Mayer K.F.X."/>
            <person name="Kaul S."/>
            <person name="Town C.D."/>
            <person name="Koo H.L."/>
            <person name="Tallon L.J."/>
            <person name="Jenkins J."/>
            <person name="Rooney T."/>
            <person name="Rizzo M."/>
            <person name="Walts A."/>
            <person name="Utterback T."/>
            <person name="Fujii C.Y."/>
            <person name="Shea T.P."/>
            <person name="Creasy T.H."/>
            <person name="Haas B."/>
            <person name="Maiti R."/>
            <person name="Wu D."/>
            <person name="Peterson J."/>
            <person name="Van Aken S."/>
            <person name="Pai G."/>
            <person name="Militscher J."/>
            <person name="Sellers P."/>
            <person name="Gill J.E."/>
            <person name="Feldblyum T.V."/>
            <person name="Preuss D."/>
            <person name="Lin X."/>
            <person name="Nierman W.C."/>
            <person name="Salzberg S.L."/>
            <person name="White O."/>
            <person name="Venter J.C."/>
            <person name="Fraser C.M."/>
            <person name="Kaneko T."/>
            <person name="Nakamura Y."/>
            <person name="Sato S."/>
            <person name="Kato T."/>
            <person name="Asamizu E."/>
            <person name="Sasamoto S."/>
            <person name="Kimura T."/>
            <person name="Idesawa K."/>
            <person name="Kawashima K."/>
            <person name="Kishida Y."/>
            <person name="Kiyokawa C."/>
            <person name="Kohara M."/>
            <person name="Matsumoto M."/>
            <person name="Matsuno A."/>
            <person name="Muraki A."/>
            <person name="Nakayama S."/>
            <person name="Nakazaki N."/>
            <person name="Shinpo S."/>
            <person name="Takeuchi C."/>
            <person name="Wada T."/>
            <person name="Watanabe A."/>
            <person name="Yamada M."/>
            <person name="Yasuda M."/>
            <person name="Tabata S."/>
        </authorList>
    </citation>
    <scope>NUCLEOTIDE SEQUENCE [LARGE SCALE GENOMIC DNA]</scope>
    <source>
        <strain>cv. Columbia</strain>
    </source>
</reference>
<reference key="2">
    <citation type="journal article" date="2017" name="Plant J.">
        <title>Araport11: a complete reannotation of the Arabidopsis thaliana reference genome.</title>
        <authorList>
            <person name="Cheng C.Y."/>
            <person name="Krishnakumar V."/>
            <person name="Chan A.P."/>
            <person name="Thibaud-Nissen F."/>
            <person name="Schobel S."/>
            <person name="Town C.D."/>
        </authorList>
    </citation>
    <scope>GENOME REANNOTATION</scope>
    <source>
        <strain>cv. Columbia</strain>
    </source>
</reference>
<reference key="3">
    <citation type="journal article" date="2024" name="Nat. Commun.">
        <title>Sororin is an evolutionary conserved antagonist of WAPL.</title>
        <authorList>
            <person name="Prusen Mota I."/>
            <person name="Galova M."/>
            <person name="Schleiffer A."/>
            <person name="Nguyen T.T."/>
            <person name="Kovacikova I."/>
            <person name="Farias Saad C."/>
            <person name="Litos G."/>
            <person name="Nishiyama T."/>
            <person name="Gregan J."/>
            <person name="Peters J.M."/>
            <person name="Schloegelhofer P."/>
        </authorList>
    </citation>
    <scope>FUNCTION</scope>
    <scope>DISRUPTION PHENOTYPE</scope>
    <source>
        <strain>cv. Columbia</strain>
    </source>
</reference>
<proteinExistence type="inferred from homology"/>
<sequence length="222" mass="24299">MEAPRSVGGRIQRKPLADCTNTVSRSSQQSSSSVKFANPSLTSSLKRLVEQTTLKEKPKDVNTSATAPEIASRPITTDVRPVTRRMSADLASPASAPSRPQTSRSDMGVSDKDFTEPWSVYTVRRKASGQKRSKDASSSTSAAARIRLDLSSSSGKKTRQASENKKKTLKVAPKKRQRTVKQEKEDPVSAACQDYIEKQKAYFAEIDAFELPVEEVSNSDSD</sequence>
<evidence type="ECO:0000250" key="1">
    <source>
        <dbReference type="UniProtKB" id="Q96FF9"/>
    </source>
</evidence>
<evidence type="ECO:0000255" key="2">
    <source>
        <dbReference type="PROSITE-ProRule" id="PRU00768"/>
    </source>
</evidence>
<evidence type="ECO:0000256" key="3">
    <source>
        <dbReference type="SAM" id="MobiDB-lite"/>
    </source>
</evidence>
<evidence type="ECO:0000269" key="4">
    <source>
    </source>
</evidence>
<evidence type="ECO:0000303" key="5">
    <source>
    </source>
</evidence>
<evidence type="ECO:0000305" key="6"/>
<evidence type="ECO:0000312" key="7">
    <source>
        <dbReference type="Araport" id="AT3G56250"/>
    </source>
</evidence>
<evidence type="ECO:0000312" key="8">
    <source>
        <dbReference type="EMBL" id="CAB87424.1"/>
    </source>
</evidence>
<name>SORIN_ARATH</name>
<comment type="function">
    <text evidence="1 4">Regulator of sister chromatid cohesion in mitosis stabilizing cohesin complex association with chromatin (By similarity). Antagonizes the action of WAPL proteins (WAPL1 and WAPL2) which stimulates cohesin dissociation from chromatin, particularly during somatic division in root cells and meiocytes during anaphase I (PubMed:38830897). Required for centromeric sister chromatid cohesion during male meiosis (microsporogenesis) (PubMed:38830897). Cohesion ensures that chromosome partitioning is accurate in dividing cells and may play an important role in DNA repair (By similarity).</text>
</comment>
<comment type="subcellular location">
    <subcellularLocation>
        <location evidence="2">Nucleus</location>
    </subcellularLocation>
</comment>
<comment type="alternative products">
    <event type="alternative initiation"/>
    <isoform>
        <id>Q9LYL8-1</id>
        <name>1</name>
        <sequence type="displayed"/>
    </isoform>
    <isoform>
        <id>Q9LYL8-2</id>
        <name>2</name>
        <sequence type="described" ref="VSP_062532"/>
    </isoform>
</comment>
<comment type="disruption phenotype">
    <text evidence="4">Dwarf plants with tissue specific cohesion defects and chromosome mis-segregation associated with sterility (abnormal anthers containing reduced level of viable pollen, and no viable seeds formation in short siliques) as well as premature separation of sister chromatids at anaphase I (PubMed:38830897). Severe alteration of root development with lost characteristic layered cellular organization (PubMed:38830897). Somatic deficiencies, but barely meiotic deficiencies, are alleviated by additional WAPL disruption in the wapl1-1 wapl2 double mutant (PubMed:38830897).</text>
</comment>
<comment type="miscellaneous">
    <text evidence="6">Named sororin after the Latin word 'soror', which means 'sister', because of its critical role in sister chromatid cohesion.</text>
</comment>
<comment type="similarity">
    <text evidence="6">Belongs to the sororin family.</text>
</comment>
<accession>Q9LYL8</accession>
<accession>A0A178VM87</accession>
<accession>A0A1I9LQ52</accession>
<organism>
    <name type="scientific">Arabidopsis thaliana</name>
    <name type="common">Mouse-ear cress</name>
    <dbReference type="NCBI Taxonomy" id="3702"/>
    <lineage>
        <taxon>Eukaryota</taxon>
        <taxon>Viridiplantae</taxon>
        <taxon>Streptophyta</taxon>
        <taxon>Embryophyta</taxon>
        <taxon>Tracheophyta</taxon>
        <taxon>Spermatophyta</taxon>
        <taxon>Magnoliopsida</taxon>
        <taxon>eudicotyledons</taxon>
        <taxon>Gunneridae</taxon>
        <taxon>Pentapetalae</taxon>
        <taxon>rosids</taxon>
        <taxon>malvids</taxon>
        <taxon>Brassicales</taxon>
        <taxon>Brassicaceae</taxon>
        <taxon>Camelineae</taxon>
        <taxon>Arabidopsis</taxon>
    </lineage>
</organism>